<protein>
    <recommendedName>
        <fullName evidence="1">Large ribosomal subunit protein eL21</fullName>
    </recommendedName>
    <alternativeName>
        <fullName evidence="2">50S ribosomal protein L21e</fullName>
    </alternativeName>
</protein>
<name>RL21_METBF</name>
<keyword id="KW-0687">Ribonucleoprotein</keyword>
<keyword id="KW-0689">Ribosomal protein</keyword>
<gene>
    <name evidence="1" type="primary">rpl21e</name>
    <name type="ordered locus">Mbar_A3231</name>
</gene>
<sequence>MTNSHGEKRCTRYKLQKTVRERGISPVSKAIQEFEEGQMVHIDIDPSIQKGMPNPKFQGSTGKIVGQRGRSYILEVRSGNAMKEVISLPQHLKPQKY</sequence>
<organism>
    <name type="scientific">Methanosarcina barkeri (strain Fusaro / DSM 804)</name>
    <dbReference type="NCBI Taxonomy" id="269797"/>
    <lineage>
        <taxon>Archaea</taxon>
        <taxon>Methanobacteriati</taxon>
        <taxon>Methanobacteriota</taxon>
        <taxon>Stenosarchaea group</taxon>
        <taxon>Methanomicrobia</taxon>
        <taxon>Methanosarcinales</taxon>
        <taxon>Methanosarcinaceae</taxon>
        <taxon>Methanosarcina</taxon>
    </lineage>
</organism>
<accession>Q466S9</accession>
<dbReference type="EMBL" id="CP000099">
    <property type="protein sequence ID" value="AAZ72113.1"/>
    <property type="molecule type" value="Genomic_DNA"/>
</dbReference>
<dbReference type="SMR" id="Q466S9"/>
<dbReference type="STRING" id="269797.Mbar_A3231"/>
<dbReference type="PaxDb" id="269797-Mbar_A3231"/>
<dbReference type="KEGG" id="mba:Mbar_A3231"/>
<dbReference type="eggNOG" id="arCOG04129">
    <property type="taxonomic scope" value="Archaea"/>
</dbReference>
<dbReference type="HOGENOM" id="CLU_103610_1_1_2"/>
<dbReference type="OrthoDB" id="6295at2157"/>
<dbReference type="GO" id="GO:1990904">
    <property type="term" value="C:ribonucleoprotein complex"/>
    <property type="evidence" value="ECO:0007669"/>
    <property type="project" value="UniProtKB-KW"/>
</dbReference>
<dbReference type="GO" id="GO:0005840">
    <property type="term" value="C:ribosome"/>
    <property type="evidence" value="ECO:0007669"/>
    <property type="project" value="UniProtKB-KW"/>
</dbReference>
<dbReference type="GO" id="GO:0003735">
    <property type="term" value="F:structural constituent of ribosome"/>
    <property type="evidence" value="ECO:0007669"/>
    <property type="project" value="InterPro"/>
</dbReference>
<dbReference type="GO" id="GO:0006412">
    <property type="term" value="P:translation"/>
    <property type="evidence" value="ECO:0007669"/>
    <property type="project" value="UniProtKB-UniRule"/>
</dbReference>
<dbReference type="FunFam" id="2.30.30.70:FF:000001">
    <property type="entry name" value="60S ribosomal protein L21"/>
    <property type="match status" value="1"/>
</dbReference>
<dbReference type="Gene3D" id="2.30.30.70">
    <property type="entry name" value="Ribosomal protein L21"/>
    <property type="match status" value="1"/>
</dbReference>
<dbReference type="HAMAP" id="MF_00369">
    <property type="entry name" value="Ribosomal_eL21"/>
    <property type="match status" value="1"/>
</dbReference>
<dbReference type="InterPro" id="IPR001147">
    <property type="entry name" value="Ribosomal_eL21"/>
</dbReference>
<dbReference type="InterPro" id="IPR022856">
    <property type="entry name" value="Ribosomal_eL21_arc"/>
</dbReference>
<dbReference type="InterPro" id="IPR018259">
    <property type="entry name" value="Ribosomal_eL21_CS"/>
</dbReference>
<dbReference type="InterPro" id="IPR036948">
    <property type="entry name" value="Ribosomal_eL21_sf"/>
</dbReference>
<dbReference type="InterPro" id="IPR008991">
    <property type="entry name" value="Translation_prot_SH3-like_sf"/>
</dbReference>
<dbReference type="NCBIfam" id="NF003303">
    <property type="entry name" value="PRK04306.1"/>
    <property type="match status" value="1"/>
</dbReference>
<dbReference type="PANTHER" id="PTHR20981">
    <property type="entry name" value="60S RIBOSOMAL PROTEIN L21"/>
    <property type="match status" value="1"/>
</dbReference>
<dbReference type="Pfam" id="PF01157">
    <property type="entry name" value="Ribosomal_L21e"/>
    <property type="match status" value="1"/>
</dbReference>
<dbReference type="SUPFAM" id="SSF50104">
    <property type="entry name" value="Translation proteins SH3-like domain"/>
    <property type="match status" value="1"/>
</dbReference>
<dbReference type="PROSITE" id="PS01171">
    <property type="entry name" value="RIBOSOMAL_L21E"/>
    <property type="match status" value="1"/>
</dbReference>
<reference key="1">
    <citation type="journal article" date="2006" name="J. Bacteriol.">
        <title>The Methanosarcina barkeri genome: comparative analysis with Methanosarcina acetivorans and Methanosarcina mazei reveals extensive rearrangement within methanosarcinal genomes.</title>
        <authorList>
            <person name="Maeder D.L."/>
            <person name="Anderson I."/>
            <person name="Brettin T.S."/>
            <person name="Bruce D.C."/>
            <person name="Gilna P."/>
            <person name="Han C.S."/>
            <person name="Lapidus A."/>
            <person name="Metcalf W.W."/>
            <person name="Saunders E."/>
            <person name="Tapia R."/>
            <person name="Sowers K.R."/>
        </authorList>
    </citation>
    <scope>NUCLEOTIDE SEQUENCE [LARGE SCALE GENOMIC DNA]</scope>
    <source>
        <strain>Fusaro / DSM 804</strain>
    </source>
</reference>
<feature type="chain" id="PRO_0000243370" description="Large ribosomal subunit protein eL21">
    <location>
        <begin position="1"/>
        <end position="97"/>
    </location>
</feature>
<proteinExistence type="inferred from homology"/>
<evidence type="ECO:0000255" key="1">
    <source>
        <dbReference type="HAMAP-Rule" id="MF_00369"/>
    </source>
</evidence>
<evidence type="ECO:0000305" key="2"/>
<comment type="similarity">
    <text evidence="1">Belongs to the eukaryotic ribosomal protein eL21 family.</text>
</comment>